<organism>
    <name type="scientific">Rotavirus A (strain RVA/Human/Australia/RV-5/1981/G2P1B[4])</name>
    <name type="common">RV-A</name>
    <name type="synonym">Rotavirus A (strain RV5)</name>
    <dbReference type="NCBI Taxonomy" id="31569"/>
    <lineage>
        <taxon>Viruses</taxon>
        <taxon>Riboviria</taxon>
        <taxon>Orthornavirae</taxon>
        <taxon>Duplornaviricota</taxon>
        <taxon>Resentoviricetes</taxon>
        <taxon>Reovirales</taxon>
        <taxon>Sedoreoviridae</taxon>
        <taxon>Rotavirus</taxon>
        <taxon>Rotavirus A</taxon>
    </lineage>
</organism>
<sequence length="775" mass="87594">MASLIYRQLLTNSYSVDLHDEIEQIGSEKTQSVTVNPGPFAQTRYAPVNWGHGEINDSTTVEPVLDGPYQPTTFKPPNDYWFLISSNTDGVVYESTNNNDFWTAVIAVEPHVSQTNRQYILFGENKQFNVENNSDKWKFFEMFKGSSQGDFSNRRTLTSNNRLVGMLKYGGRVWTFHGETPRATTDSSNTADLNNISIMIHSEFYIIPRSQESKCNEYIKNGLPPIQNTRNVVPLSLSSRSIQYRRAQVNEDITISKTSLWKEMQYNRDIIIRFKFGNSVIKLGGLGYKWSEISYKAANYQYSYSRDGEQVTAHTTCSVNGVNNFSYNGGSLPTDFSISRYEVSKENSYVYIDYWDDSKAFRNMVYVRSLAANLNSVKCTGGSYDFRLPVGGWPIMNGGAVSLHFAGVTLSTQFTDFVSLNSLRFRFSLTVDEPSFSIIRTRTINLYGLPAANPNNGNEYYEMSGRFSLISLVLTNDDYQTPIMNSVTVRQDLERQLNDLREEFNSLSQEIAMSQLIDLALLPLDMFSMFSGIKSTIDLTKSMATSVMKKFRKSKLATSISEMTNSLSDAASSASRSASIRSNLSTISNWTNTSKSVSNVTDSVNDVSTQTSTISKKLRLREMITQTEGMSFDDISAAVLKTKIDMSTQIGKNTLPDIVTEASEKFIPKRSYRVLKDNEVMEINTEGKFFAYKVDTLNEIPFDINKFAELVTDSPVISAIIDFKTLKNLNDNYGITRIEAFNLIKSNPNVLRNFINQNNPIIRNRIEQLILQCKL</sequence>
<proteinExistence type="inferred from homology"/>
<dbReference type="EMBL" id="M32559">
    <property type="protein sequence ID" value="AAA47333.1"/>
    <property type="molecule type" value="Genomic_RNA"/>
</dbReference>
<dbReference type="PIR" id="A43760">
    <property type="entry name" value="VPXRWF"/>
</dbReference>
<dbReference type="SMR" id="P30214"/>
<dbReference type="GO" id="GO:0044172">
    <property type="term" value="C:host cell endoplasmic reticulum-Golgi intermediate compartment"/>
    <property type="evidence" value="ECO:0007669"/>
    <property type="project" value="UniProtKB-SubCell"/>
</dbReference>
<dbReference type="GO" id="GO:0020002">
    <property type="term" value="C:host cell plasma membrane"/>
    <property type="evidence" value="ECO:0007669"/>
    <property type="project" value="UniProtKB-SubCell"/>
</dbReference>
<dbReference type="GO" id="GO:0044168">
    <property type="term" value="C:host cell rough endoplasmic reticulum"/>
    <property type="evidence" value="ECO:0007669"/>
    <property type="project" value="UniProtKB-SubCell"/>
</dbReference>
<dbReference type="GO" id="GO:0044163">
    <property type="term" value="C:host cytoskeleton"/>
    <property type="evidence" value="ECO:0007669"/>
    <property type="project" value="UniProtKB-SubCell"/>
</dbReference>
<dbReference type="GO" id="GO:0016020">
    <property type="term" value="C:membrane"/>
    <property type="evidence" value="ECO:0007669"/>
    <property type="project" value="UniProtKB-KW"/>
</dbReference>
<dbReference type="GO" id="GO:0039624">
    <property type="term" value="C:viral outer capsid"/>
    <property type="evidence" value="ECO:0007669"/>
    <property type="project" value="UniProtKB-UniRule"/>
</dbReference>
<dbReference type="GO" id="GO:0039665">
    <property type="term" value="P:permeabilization of host organelle membrane involved in viral entry into host cell"/>
    <property type="evidence" value="ECO:0007669"/>
    <property type="project" value="UniProtKB-UniRule"/>
</dbReference>
<dbReference type="GO" id="GO:0019062">
    <property type="term" value="P:virion attachment to host cell"/>
    <property type="evidence" value="ECO:0007669"/>
    <property type="project" value="UniProtKB-UniRule"/>
</dbReference>
<dbReference type="Gene3D" id="1.20.5.170">
    <property type="match status" value="1"/>
</dbReference>
<dbReference type="Gene3D" id="2.60.120.200">
    <property type="match status" value="1"/>
</dbReference>
<dbReference type="HAMAP" id="MF_04132">
    <property type="entry name" value="Rota_A_VP4"/>
    <property type="match status" value="1"/>
</dbReference>
<dbReference type="HAMAP" id="MF_04125">
    <property type="entry name" value="Rota_VP4"/>
    <property type="match status" value="1"/>
</dbReference>
<dbReference type="InterPro" id="IPR013320">
    <property type="entry name" value="ConA-like_dom_sf"/>
</dbReference>
<dbReference type="InterPro" id="IPR042546">
    <property type="entry name" value="Rota_A_VP4"/>
</dbReference>
<dbReference type="InterPro" id="IPR035330">
    <property type="entry name" value="Rota_VP4_MID"/>
</dbReference>
<dbReference type="InterPro" id="IPR038017">
    <property type="entry name" value="Rota_VP4_MID_sf"/>
</dbReference>
<dbReference type="InterPro" id="IPR000416">
    <property type="entry name" value="VP4_concanavalin-like"/>
</dbReference>
<dbReference type="InterPro" id="IPR035329">
    <property type="entry name" value="VP4_helical"/>
</dbReference>
<dbReference type="Pfam" id="PF17477">
    <property type="entry name" value="Rota_VP4_MID"/>
    <property type="match status" value="1"/>
</dbReference>
<dbReference type="Pfam" id="PF00426">
    <property type="entry name" value="VP4_haemagglut"/>
    <property type="match status" value="1"/>
</dbReference>
<dbReference type="Pfam" id="PF17478">
    <property type="entry name" value="VP4_helical"/>
    <property type="match status" value="1"/>
</dbReference>
<dbReference type="SUPFAM" id="SSF49899">
    <property type="entry name" value="Concanavalin A-like lectins/glucanases"/>
    <property type="match status" value="1"/>
</dbReference>
<dbReference type="SUPFAM" id="SSF111379">
    <property type="entry name" value="VP4 membrane interaction domain"/>
    <property type="match status" value="1"/>
</dbReference>
<reference key="1">
    <citation type="journal article" date="1987" name="Arch. Virol.">
        <title>Marked sequence variation between segment 4 genes of human RV-5 and simian SA 11 rotaviruses.</title>
        <authorList>
            <person name="Kantharidis P."/>
            <person name="Dyall-Smith M.L."/>
            <person name="Holmes I.H."/>
        </authorList>
    </citation>
    <scope>NUCLEOTIDE SEQUENCE [GENOMIC RNA]</scope>
</reference>
<keyword id="KW-0167">Capsid protein</keyword>
<keyword id="KW-0175">Coiled coil</keyword>
<keyword id="KW-1015">Disulfide bond</keyword>
<keyword id="KW-0348">Hemagglutinin</keyword>
<keyword id="KW-1032">Host cell membrane</keyword>
<keyword id="KW-1035">Host cytoplasm</keyword>
<keyword id="KW-1037">Host cytoskeleton</keyword>
<keyword id="KW-1038">Host endoplasmic reticulum</keyword>
<keyword id="KW-1043">Host membrane</keyword>
<keyword id="KW-0945">Host-virus interaction</keyword>
<keyword id="KW-0472">Membrane</keyword>
<keyword id="KW-1152">Outer capsid protein</keyword>
<keyword id="KW-1161">Viral attachment to host cell</keyword>
<keyword id="KW-1162">Viral penetration into host cytoplasm</keyword>
<keyword id="KW-1173">Viral penetration via permeabilization of host membrane</keyword>
<keyword id="KW-0946">Virion</keyword>
<keyword id="KW-1160">Virus entry into host cell</keyword>
<evidence type="ECO:0000255" key="1">
    <source>
        <dbReference type="HAMAP-Rule" id="MF_04132"/>
    </source>
</evidence>
<name>VP4_ROTH5</name>
<organismHost>
    <name type="scientific">Homo sapiens</name>
    <name type="common">Human</name>
    <dbReference type="NCBI Taxonomy" id="9606"/>
</organismHost>
<comment type="function">
    <molecule>Outer capsid protein VP4</molecule>
    <text evidence="1">Spike-forming protein that mediates virion attachment to the host epithelial cell receptors and plays a major role in cell penetration, determination of host range restriction and virulence. Rotavirus attachment and entry into the host cell probably involves multiple sequential contacts between the outer capsid proteins VP4 and VP7, and the cell receptors. It is subsequently lost, together with VP7, following virus entry into the host cell. Following entry into the host cell, low intracellular or intravesicular Ca(2+) concentration probably causes the calcium-stabilized VP7 trimers to dissociate from the virion. This step is probably necessary for the membrane-disrupting entry step and the release of VP4, which is locked onto the virion by VP7. During the virus exit from the host cell, VP4 seems to be required to target the newly formed virions to the host cell lipid rafts.</text>
</comment>
<comment type="function">
    <molecule>Outer capsid protein VP5*</molecule>
    <text evidence="1">Forms the spike 'foot' and 'body' and acts as a membrane permeabilization protein that mediates release of viral particles from endosomal compartments into the cytoplasm. During entry, the part of VP5* that protrudes from the virus folds back on itself and reorganizes from a local dimer to a trimer. This reorganization may be linked to membrane penetration by exposing VP5* hydrophobic region. In integrin-dependent strains, VP5* targets the integrin heterodimer ITGA2/ITGB1 for cell attachment.</text>
</comment>
<comment type="function">
    <molecule>Outer capsid protein VP8*</molecule>
    <text evidence="1">Forms the head of the spikes and mediates the recognition of specific host cell surface glycans. It is the viral hemagglutinin and an important target of neutralizing antibodies. In sialic acid-dependent strains, VP8* binds to host cell sialic acid, most probably a ganglioside, providing the initial contact. In some other strains, VP8* mediates the attachment to histo-blood group antigens (HBGAs) for viral entry.</text>
</comment>
<comment type="subunit">
    <molecule>Outer capsid protein VP4</molecule>
    <text evidence="1">Homotrimer. VP4 adopts a dimeric appearance above the capsid surface, while forming a trimeric base anchored inside the capsid layer. Only hints of the third molecule are observed above the capsid surface. It probably performs a series of molecular rearrangements during viral entry. Prior to trypsin cleavage, it is flexible. The priming trypsin cleavage triggers its rearrangement into rigid spikes with approximate two-fold symmetry of their protruding parts. After an unknown second triggering event, cleaved VP4 may undergo another rearrangement, in which two VP5* subunits fold back on themselves and join a third subunit to form a tightly associated trimer, shaped like a folded umbrella. Interacts with VP6. Interacts with VP7.</text>
</comment>
<comment type="subunit">
    <molecule>Outer capsid protein VP5*</molecule>
    <text evidence="1">Homotrimer. The trimer is coiled-coil stabilized by its C-terminus, however, its N-terminus, known as antigen domain or 'body', seems to be flexible allowing it to self-associate either as a dimer or a trimer.</text>
</comment>
<comment type="subcellular location">
    <molecule>Outer capsid protein VP4</molecule>
    <subcellularLocation>
        <location evidence="1">Virion</location>
    </subcellularLocation>
    <subcellularLocation>
        <location evidence="1">Host rough endoplasmic reticulum</location>
    </subcellularLocation>
    <subcellularLocation>
        <location evidence="1">Host cell membrane</location>
    </subcellularLocation>
    <subcellularLocation>
        <location evidence="1">Host cytoplasm</location>
        <location evidence="1">Host cytoskeleton</location>
    </subcellularLocation>
    <subcellularLocation>
        <location evidence="1">Host endoplasmic reticulum-Golgi intermediate compartment</location>
    </subcellularLocation>
    <text evidence="1">The outer layer contains 180 copies of VP4, grouped as 60 dimers. Immature double-layered particles assembled in the cytoplasm bud across the membrane of the endoplasmic reticulum, acquiring during this process a transient lipid membrane that is modified with the ER resident viral glycoproteins NSP4 and VP7; these enveloped particles also contain VP4. As the particles move towards the interior of the ER cisternae, the transient lipid membrane and the non-structural protein NSP4 are lost, while the virus surface proteins VP4 and VP7 rearrange to form the outermost virus protein layer, yielding mature infectious triple-layered particles. VP4 also seems to associate with lipid rafts of the host cell membrane probably for the exit of the virus from the infected cell by an alternate pathway.</text>
</comment>
<comment type="subcellular location">
    <molecule>Outer capsid protein VP8*</molecule>
    <subcellularLocation>
        <location evidence="1">Virion</location>
    </subcellularLocation>
    <text evidence="1">Outer capsid protein.</text>
</comment>
<comment type="subcellular location">
    <molecule>Outer capsid protein VP5*</molecule>
    <subcellularLocation>
        <location evidence="1">Virion</location>
    </subcellularLocation>
    <text evidence="1">Outer capsid protein.</text>
</comment>
<comment type="domain">
    <molecule>Outer capsid protein VP4</molecule>
    <text evidence="1">The VP4 spike is divided into a foot, a stalk and body, and a head.</text>
</comment>
<comment type="PTM">
    <molecule>Outer capsid protein VP4</molecule>
    <text evidence="1">Proteolytic cleavage by trypsin results in activation of VP4 functions and greatly increases infectivity. The penetration into the host cell is dependent on trypsin treatment of VP4. It produces two peptides, VP5* and VP8* that remain associated with the virion. Cleavage of VP4 by trypsin probably occurs in vivo in the lumen of the intestine prior to infection of enterocytes. Trypsin seems to be incorporated into the three-layered viral particles but remains inactive as long as the viral outer capsid is intact and would only be activated upon the solubilization of the latter.</text>
</comment>
<comment type="miscellaneous">
    <text evidence="1">In group A rotaviruses, VP4 defines the P serotype.</text>
</comment>
<comment type="miscellaneous">
    <text evidence="1">Some rotavirus strains are neuraminidase-sensitive and require sialic acid to attach to the cell surface. Some rotavirus strains are integrin-dependent. Some rotavirus strains depend on ganglioside for their entry into the host cell. Hsp70 also seems to be involved in the entry of some strains.</text>
</comment>
<comment type="similarity">
    <text evidence="1">Belongs to the rotavirus VP4 family.</text>
</comment>
<accession>P30214</accession>
<feature type="chain" id="PRO_0000041048" description="Outer capsid protein VP4" evidence="1">
    <location>
        <begin position="1"/>
        <end position="775"/>
    </location>
</feature>
<feature type="chain" id="PRO_0000041049" description="Outer capsid protein VP8*" evidence="1">
    <location>
        <begin position="1"/>
        <end position="230"/>
    </location>
</feature>
<feature type="chain" id="PRO_0000041050" description="Outer capsid protein VP5*" evidence="1">
    <location>
        <begin position="247"/>
        <end position="775"/>
    </location>
</feature>
<feature type="region of interest" description="Spike head" evidence="1">
    <location>
        <begin position="65"/>
        <end position="223"/>
    </location>
</feature>
<feature type="region of interest" description="Spike body and stalk (antigen domain)" evidence="1">
    <location>
        <begin position="247"/>
        <end position="478"/>
    </location>
</feature>
<feature type="region of interest" description="Hydrophobic; possible role in virus entry into host cell" evidence="1">
    <location>
        <begin position="388"/>
        <end position="408"/>
    </location>
</feature>
<feature type="region of interest" description="Spike foot" evidence="1">
    <location>
        <begin position="509"/>
        <end position="775"/>
    </location>
</feature>
<feature type="coiled-coil region" evidence="1">
    <location>
        <begin position="483"/>
        <end position="510"/>
    </location>
</feature>
<feature type="short sequence motif" description="DGE motif; interaction with ITGA2/ITGB1 heterodimer" evidence="1">
    <location>
        <begin position="307"/>
        <end position="309"/>
    </location>
</feature>
<feature type="short sequence motif" description="YGL motif; interaction with ITGA4" evidence="1">
    <location>
        <begin position="447"/>
        <end position="449"/>
    </location>
</feature>
<feature type="short sequence motif" description="KID motif; interaction with HSPA8" evidence="1">
    <location>
        <begin position="643"/>
        <end position="645"/>
    </location>
</feature>
<feature type="site" description="Cleavage" evidence="1">
    <location>
        <begin position="230"/>
        <end position="231"/>
    </location>
</feature>
<feature type="site" description="Cleavage" evidence="1">
    <location>
        <begin position="240"/>
        <end position="241"/>
    </location>
</feature>
<feature type="site" description="Cleavage; associated with enhancement of infectivity" evidence="1">
    <location>
        <begin position="246"/>
        <end position="247"/>
    </location>
</feature>
<feature type="disulfide bond" evidence="1">
    <location>
        <begin position="317"/>
        <end position="379"/>
    </location>
</feature>
<protein>
    <recommendedName>
        <fullName evidence="1">Outer capsid protein VP4</fullName>
    </recommendedName>
    <alternativeName>
        <fullName evidence="1">Hemagglutinin</fullName>
    </alternativeName>
    <component>
        <recommendedName>
            <fullName evidence="1">Outer capsid protein VP8*</fullName>
        </recommendedName>
    </component>
    <component>
        <recommendedName>
            <fullName evidence="1">Outer capsid protein VP5*</fullName>
        </recommendedName>
    </component>
</protein>